<proteinExistence type="inferred from homology"/>
<organism>
    <name type="scientific">Rhinopithecus bieti</name>
    <name type="common">Black snub-nosed monkey</name>
    <name type="synonym">Pygathrix bieti</name>
    <dbReference type="NCBI Taxonomy" id="61621"/>
    <lineage>
        <taxon>Eukaryota</taxon>
        <taxon>Metazoa</taxon>
        <taxon>Chordata</taxon>
        <taxon>Craniata</taxon>
        <taxon>Vertebrata</taxon>
        <taxon>Euteleostomi</taxon>
        <taxon>Mammalia</taxon>
        <taxon>Eutheria</taxon>
        <taxon>Euarchontoglires</taxon>
        <taxon>Primates</taxon>
        <taxon>Haplorrhini</taxon>
        <taxon>Catarrhini</taxon>
        <taxon>Cercopithecidae</taxon>
        <taxon>Colobinae</taxon>
        <taxon>Rhinopithecus</taxon>
    </lineage>
</organism>
<evidence type="ECO:0000250" key="1">
    <source>
        <dbReference type="UniProtKB" id="P51681"/>
    </source>
</evidence>
<evidence type="ECO:0000250" key="2">
    <source>
        <dbReference type="UniProtKB" id="Q9XT76"/>
    </source>
</evidence>
<evidence type="ECO:0000255" key="3"/>
<evidence type="ECO:0000255" key="4">
    <source>
        <dbReference type="PROSITE-ProRule" id="PRU00521"/>
    </source>
</evidence>
<comment type="function">
    <text evidence="1">Receptor for a number of inflammatory CC-chemokines including CCL3/MIP-1-alpha, CCL4/MIP-1-beta and RANTES and subsequently transduces a signal by increasing the intracellular calcium ion level. May play a role in the control of granulocytic lineage proliferation or differentiation. Participates in T-lymphocyte migration to the infection site by acting as a chemotactic receptor.</text>
</comment>
<comment type="subunit">
    <text evidence="1">Interacts with PRAF2. Efficient ligand binding to CCL3/MIP-1alpha and CCL4/MIP-1beta requires sulfation, O-glycosylation and sialic acid modifications. Glycosylation on Ser-6 is required for efficient binding of CCL4. Interacts with GRK2. Interacts with ARRB1 and ARRB2. Interacts with CNIH4. Interacts with S100A4; this interaction stimulates T-lymphocyte chemotaxis.</text>
</comment>
<comment type="subcellular location">
    <subcellularLocation>
        <location evidence="2">Cell membrane</location>
        <topology evidence="2">Multi-pass membrane protein</topology>
    </subcellularLocation>
</comment>
<comment type="PTM">
    <text evidence="1">Sulfated on at least 2 of the N-terminal tyrosines. Sulfation is required for efficient binding of the chemokines, CCL3 and CCL4 (By similarity).</text>
</comment>
<comment type="PTM">
    <text evidence="1">Palmitoylation in the C-terminal is important for cell surface expression.</text>
</comment>
<comment type="PTM">
    <text evidence="1">Phosphorylation on serine residues in the C-terminal is stimulated by binding CC chemokines especially by APO-RANTES.</text>
</comment>
<comment type="PTM">
    <text evidence="1">O-glycosylated, but not N-glycosylated. Ser-6 appears to be the major site even if Ser-7 may be also O-glycosylated. Also sialylated glycans present which contribute to chemokine binding. Thr-16 and Ser-17 may also be glycosylated and, if so, with small moieties such as a T-antigen.</text>
</comment>
<comment type="similarity">
    <text evidence="4">Belongs to the G-protein coupled receptor 1 family.</text>
</comment>
<accession>O97880</accession>
<gene>
    <name type="primary">CCR5</name>
    <name type="synonym">CMKBR5</name>
</gene>
<feature type="chain" id="PRO_0000069278" description="C-C chemokine receptor type 5">
    <location>
        <begin position="1"/>
        <end position="352"/>
    </location>
</feature>
<feature type="topological domain" description="Extracellular" evidence="3">
    <location>
        <begin position="1"/>
        <end position="30"/>
    </location>
</feature>
<feature type="transmembrane region" description="Helical; Name=1" evidence="3">
    <location>
        <begin position="31"/>
        <end position="58"/>
    </location>
</feature>
<feature type="topological domain" description="Cytoplasmic" evidence="3">
    <location>
        <begin position="59"/>
        <end position="68"/>
    </location>
</feature>
<feature type="transmembrane region" description="Helical; Name=2" evidence="3">
    <location>
        <begin position="69"/>
        <end position="89"/>
    </location>
</feature>
<feature type="topological domain" description="Extracellular" evidence="3">
    <location>
        <begin position="90"/>
        <end position="102"/>
    </location>
</feature>
<feature type="transmembrane region" description="Helical; Name=3" evidence="3">
    <location>
        <begin position="103"/>
        <end position="124"/>
    </location>
</feature>
<feature type="topological domain" description="Cytoplasmic" evidence="3">
    <location>
        <begin position="125"/>
        <end position="141"/>
    </location>
</feature>
<feature type="transmembrane region" description="Helical; Name=4" evidence="3">
    <location>
        <begin position="142"/>
        <end position="166"/>
    </location>
</feature>
<feature type="topological domain" description="Extracellular" evidence="3">
    <location>
        <begin position="167"/>
        <end position="198"/>
    </location>
</feature>
<feature type="transmembrane region" description="Helical; Name=5" evidence="3">
    <location>
        <begin position="199"/>
        <end position="218"/>
    </location>
</feature>
<feature type="topological domain" description="Cytoplasmic" evidence="3">
    <location>
        <begin position="219"/>
        <end position="235"/>
    </location>
</feature>
<feature type="transmembrane region" description="Helical; Name=6" evidence="3">
    <location>
        <begin position="236"/>
        <end position="260"/>
    </location>
</feature>
<feature type="topological domain" description="Extracellular" evidence="3">
    <location>
        <begin position="261"/>
        <end position="277"/>
    </location>
</feature>
<feature type="transmembrane region" description="Helical; Name=7" evidence="3">
    <location>
        <begin position="278"/>
        <end position="301"/>
    </location>
</feature>
<feature type="topological domain" description="Cytoplasmic" evidence="3">
    <location>
        <begin position="302"/>
        <end position="352"/>
    </location>
</feature>
<feature type="modified residue" description="Sulfotyrosine" evidence="1">
    <location>
        <position position="3"/>
    </location>
</feature>
<feature type="modified residue" description="Sulfotyrosine" evidence="3">
    <location>
        <position position="10"/>
    </location>
</feature>
<feature type="modified residue" description="Sulfotyrosine" evidence="3">
    <location>
        <position position="14"/>
    </location>
</feature>
<feature type="modified residue" description="Sulfotyrosine" evidence="3">
    <location>
        <position position="15"/>
    </location>
</feature>
<feature type="modified residue" description="Phosphoserine; by BARK1" evidence="1">
    <location>
        <position position="336"/>
    </location>
</feature>
<feature type="modified residue" description="Phosphoserine; by BARK1" evidence="1">
    <location>
        <position position="337"/>
    </location>
</feature>
<feature type="modified residue" description="Phosphoserine; by BARK1" evidence="1">
    <location>
        <position position="342"/>
    </location>
</feature>
<feature type="modified residue" description="Phosphoserine; by BARK1" evidence="1">
    <location>
        <position position="349"/>
    </location>
</feature>
<feature type="lipid moiety-binding region" description="S-palmitoyl cysteine" evidence="1">
    <location>
        <position position="321"/>
    </location>
</feature>
<feature type="lipid moiety-binding region" description="S-palmitoyl cysteine" evidence="1">
    <location>
        <position position="323"/>
    </location>
</feature>
<feature type="lipid moiety-binding region" description="S-palmitoyl cysteine" evidence="1">
    <location>
        <position position="324"/>
    </location>
</feature>
<feature type="glycosylation site" description="O-linked (GalNAc...) serine" evidence="1">
    <location>
        <position position="6"/>
    </location>
</feature>
<feature type="glycosylation site" description="O-linked (GalNAc...) serine" evidence="1">
    <location>
        <position position="7"/>
    </location>
</feature>
<feature type="disulfide bond" evidence="1">
    <location>
        <begin position="20"/>
        <end position="269"/>
    </location>
</feature>
<feature type="disulfide bond" evidence="4">
    <location>
        <begin position="101"/>
        <end position="178"/>
    </location>
</feature>
<dbReference type="EMBL" id="AF075445">
    <property type="protein sequence ID" value="AAD19857.1"/>
    <property type="molecule type" value="Genomic_DNA"/>
</dbReference>
<dbReference type="SMR" id="O97880"/>
<dbReference type="STRING" id="61621.ENSRBIP00000003507"/>
<dbReference type="GlyCosmos" id="O97880">
    <property type="glycosylation" value="2 sites, No reported glycans"/>
</dbReference>
<dbReference type="Proteomes" id="UP000233180">
    <property type="component" value="Unplaced"/>
</dbReference>
<dbReference type="GO" id="GO:0005737">
    <property type="term" value="C:cytoplasm"/>
    <property type="evidence" value="ECO:0007669"/>
    <property type="project" value="TreeGrafter"/>
</dbReference>
<dbReference type="GO" id="GO:0009897">
    <property type="term" value="C:external side of plasma membrane"/>
    <property type="evidence" value="ECO:0000250"/>
    <property type="project" value="UniProtKB"/>
</dbReference>
<dbReference type="GO" id="GO:0016493">
    <property type="term" value="F:C-C chemokine receptor activity"/>
    <property type="evidence" value="ECO:0000250"/>
    <property type="project" value="UniProtKB"/>
</dbReference>
<dbReference type="GO" id="GO:0071791">
    <property type="term" value="F:chemokine (C-C motif) ligand 5 binding"/>
    <property type="evidence" value="ECO:0007669"/>
    <property type="project" value="TreeGrafter"/>
</dbReference>
<dbReference type="GO" id="GO:0019722">
    <property type="term" value="P:calcium-mediated signaling"/>
    <property type="evidence" value="ECO:0007669"/>
    <property type="project" value="TreeGrafter"/>
</dbReference>
<dbReference type="GO" id="GO:0060326">
    <property type="term" value="P:cell chemotaxis"/>
    <property type="evidence" value="ECO:0007669"/>
    <property type="project" value="TreeGrafter"/>
</dbReference>
<dbReference type="GO" id="GO:0006955">
    <property type="term" value="P:immune response"/>
    <property type="evidence" value="ECO:0007669"/>
    <property type="project" value="InterPro"/>
</dbReference>
<dbReference type="GO" id="GO:0006954">
    <property type="term" value="P:inflammatory response"/>
    <property type="evidence" value="ECO:0007669"/>
    <property type="project" value="InterPro"/>
</dbReference>
<dbReference type="GO" id="GO:0007204">
    <property type="term" value="P:positive regulation of cytosolic calcium ion concentration"/>
    <property type="evidence" value="ECO:0007669"/>
    <property type="project" value="TreeGrafter"/>
</dbReference>
<dbReference type="CDD" id="cd15184">
    <property type="entry name" value="7tmA_CCR5_CCR2"/>
    <property type="match status" value="1"/>
</dbReference>
<dbReference type="FunFam" id="1.20.1070.10:FF:000026">
    <property type="entry name" value="C-C chemokine receptor type 5"/>
    <property type="match status" value="1"/>
</dbReference>
<dbReference type="Gene3D" id="1.20.1070.10">
    <property type="entry name" value="Rhodopsin 7-helix transmembrane proteins"/>
    <property type="match status" value="1"/>
</dbReference>
<dbReference type="InterPro" id="IPR050119">
    <property type="entry name" value="CCR1-9-like"/>
</dbReference>
<dbReference type="InterPro" id="IPR002240">
    <property type="entry name" value="Chemokine_CCR5"/>
</dbReference>
<dbReference type="InterPro" id="IPR000355">
    <property type="entry name" value="Chemokine_rcpt"/>
</dbReference>
<dbReference type="InterPro" id="IPR000276">
    <property type="entry name" value="GPCR_Rhodpsn"/>
</dbReference>
<dbReference type="InterPro" id="IPR017452">
    <property type="entry name" value="GPCR_Rhodpsn_7TM"/>
</dbReference>
<dbReference type="PANTHER" id="PTHR10489:SF686">
    <property type="entry name" value="C-C CHEMOKINE RECEPTOR TYPE 5"/>
    <property type="match status" value="1"/>
</dbReference>
<dbReference type="PANTHER" id="PTHR10489">
    <property type="entry name" value="CELL ADHESION MOLECULE"/>
    <property type="match status" value="1"/>
</dbReference>
<dbReference type="Pfam" id="PF00001">
    <property type="entry name" value="7tm_1"/>
    <property type="match status" value="1"/>
</dbReference>
<dbReference type="PRINTS" id="PR00657">
    <property type="entry name" value="CCCHEMOKINER"/>
</dbReference>
<dbReference type="PRINTS" id="PR01110">
    <property type="entry name" value="CHEMOKINER5"/>
</dbReference>
<dbReference type="PRINTS" id="PR00237">
    <property type="entry name" value="GPCRRHODOPSN"/>
</dbReference>
<dbReference type="SUPFAM" id="SSF81321">
    <property type="entry name" value="Family A G protein-coupled receptor-like"/>
    <property type="match status" value="1"/>
</dbReference>
<dbReference type="PROSITE" id="PS00237">
    <property type="entry name" value="G_PROTEIN_RECEP_F1_1"/>
    <property type="match status" value="1"/>
</dbReference>
<dbReference type="PROSITE" id="PS50262">
    <property type="entry name" value="G_PROTEIN_RECEP_F1_2"/>
    <property type="match status" value="1"/>
</dbReference>
<name>CCR5_RHIBE</name>
<reference key="1">
    <citation type="journal article" date="1999" name="Mol. Biol. Evol.">
        <title>Sequence evolution of the CCR5 chemokine receptor gene in primates.</title>
        <authorList>
            <person name="Zhang Y.-W."/>
            <person name="Ryder O.A."/>
            <person name="Zhang Y.-P."/>
        </authorList>
    </citation>
    <scope>NUCLEOTIDE SEQUENCE [GENOMIC DNA]</scope>
</reference>
<sequence length="352" mass="40585">MDYQVSSPTYDIDYYTSEPCQKVNVKQIAARLLPPLYSLVFIFGFVGNILVVLILINCKRLKSMTDIYLLNLAISDLFFLLTVPFWAHYAAAQWDFGNTMCQLLTGLYFIGFFSGIFFIILLTIDRYLAIVHAVFALKARTVTFGVVTSVITWVVAVFASLPGIIFTRSQREGLHYTCSSHFPYSQYQFWKNFQTLKIVILGLVLPLLVMVICYSGILKTLLRCRNEKKRHRAVRLIFTIMIVYFLFWAPYNIVLLLNTFQEFFGLNNCSSSNRLDQAMQVTETLGMTHCCINPIIYAFVGEKFRNYLLVFFQKHIAKRFCKCCYIFQQEAPERASSVYTRSTGEQEISVGL</sequence>
<protein>
    <recommendedName>
        <fullName>C-C chemokine receptor type 5</fullName>
        <shortName>C-C CKR-5</shortName>
        <shortName>CC-CKR-5</shortName>
        <shortName>CCR-5</shortName>
        <shortName>CCR5</shortName>
    </recommendedName>
    <cdAntigenName>CD195</cdAntigenName>
</protein>
<keyword id="KW-1003">Cell membrane</keyword>
<keyword id="KW-1015">Disulfide bond</keyword>
<keyword id="KW-0297">G-protein coupled receptor</keyword>
<keyword id="KW-0325">Glycoprotein</keyword>
<keyword id="KW-0449">Lipoprotein</keyword>
<keyword id="KW-0472">Membrane</keyword>
<keyword id="KW-0564">Palmitate</keyword>
<keyword id="KW-0597">Phosphoprotein</keyword>
<keyword id="KW-0675">Receptor</keyword>
<keyword id="KW-1185">Reference proteome</keyword>
<keyword id="KW-0765">Sulfation</keyword>
<keyword id="KW-0807">Transducer</keyword>
<keyword id="KW-0812">Transmembrane</keyword>
<keyword id="KW-1133">Transmembrane helix</keyword>